<reference key="1">
    <citation type="journal article" date="2008" name="PLoS ONE">
        <title>A recalibrated molecular clock and independent origins for the cholera pandemic clones.</title>
        <authorList>
            <person name="Feng L."/>
            <person name="Reeves P.R."/>
            <person name="Lan R."/>
            <person name="Ren Y."/>
            <person name="Gao C."/>
            <person name="Zhou Z."/>
            <person name="Ren Y."/>
            <person name="Cheng J."/>
            <person name="Wang W."/>
            <person name="Wang J."/>
            <person name="Qian W."/>
            <person name="Li D."/>
            <person name="Wang L."/>
        </authorList>
    </citation>
    <scope>NUCLEOTIDE SEQUENCE [LARGE SCALE GENOMIC DNA]</scope>
    <source>
        <strain>M66-2</strain>
    </source>
</reference>
<evidence type="ECO:0000255" key="1">
    <source>
        <dbReference type="HAMAP-Rule" id="MF_00816"/>
    </source>
</evidence>
<protein>
    <recommendedName>
        <fullName evidence="1">UPF0352 protein VCM66_1964</fullName>
    </recommendedName>
</protein>
<gene>
    <name type="ordered locus">VCM66_1964</name>
</gene>
<accession>C3LNZ1</accession>
<sequence>MPITSKYSDEHVESILTEIAAVLNKHNASPELTLMVVGNIATNVINQNVAAAQRKVIAEKFAQALVSSLQS</sequence>
<proteinExistence type="inferred from homology"/>
<name>Y1964_VIBCM</name>
<comment type="similarity">
    <text evidence="1">Belongs to the UPF0352 family.</text>
</comment>
<organism>
    <name type="scientific">Vibrio cholerae serotype O1 (strain M66-2)</name>
    <dbReference type="NCBI Taxonomy" id="579112"/>
    <lineage>
        <taxon>Bacteria</taxon>
        <taxon>Pseudomonadati</taxon>
        <taxon>Pseudomonadota</taxon>
        <taxon>Gammaproteobacteria</taxon>
        <taxon>Vibrionales</taxon>
        <taxon>Vibrionaceae</taxon>
        <taxon>Vibrio</taxon>
    </lineage>
</organism>
<feature type="chain" id="PRO_1000148653" description="UPF0352 protein VCM66_1964">
    <location>
        <begin position="1"/>
        <end position="71"/>
    </location>
</feature>
<dbReference type="EMBL" id="CP001233">
    <property type="protein sequence ID" value="ACP06267.1"/>
    <property type="molecule type" value="Genomic_DNA"/>
</dbReference>
<dbReference type="RefSeq" id="WP_001123168.1">
    <property type="nucleotide sequence ID" value="NC_012578.1"/>
</dbReference>
<dbReference type="SMR" id="C3LNZ1"/>
<dbReference type="KEGG" id="vcm:VCM66_1964"/>
<dbReference type="HOGENOM" id="CLU_175457_0_0_6"/>
<dbReference type="Proteomes" id="UP000001217">
    <property type="component" value="Chromosome I"/>
</dbReference>
<dbReference type="Gene3D" id="1.10.3390.10">
    <property type="entry name" value="YejL-like"/>
    <property type="match status" value="1"/>
</dbReference>
<dbReference type="HAMAP" id="MF_00816">
    <property type="entry name" value="UPF0352"/>
    <property type="match status" value="1"/>
</dbReference>
<dbReference type="InterPro" id="IPR009857">
    <property type="entry name" value="UPF0352"/>
</dbReference>
<dbReference type="InterPro" id="IPR023202">
    <property type="entry name" value="YejL_sf"/>
</dbReference>
<dbReference type="NCBIfam" id="NF010242">
    <property type="entry name" value="PRK13689.1"/>
    <property type="match status" value="1"/>
</dbReference>
<dbReference type="Pfam" id="PF07208">
    <property type="entry name" value="DUF1414"/>
    <property type="match status" value="1"/>
</dbReference>
<dbReference type="PIRSF" id="PIRSF006188">
    <property type="entry name" value="UCP006188"/>
    <property type="match status" value="1"/>
</dbReference>
<dbReference type="SUPFAM" id="SSF158651">
    <property type="entry name" value="YejL-like"/>
    <property type="match status" value="1"/>
</dbReference>